<accession>A9R4P9</accession>
<protein>
    <recommendedName>
        <fullName evidence="1">Mannonate dehydratase</fullName>
        <ecNumber evidence="1">4.2.1.8</ecNumber>
    </recommendedName>
    <alternativeName>
        <fullName evidence="1">D-mannonate hydro-lyase</fullName>
    </alternativeName>
</protein>
<organism>
    <name type="scientific">Yersinia pestis bv. Antiqua (strain Angola)</name>
    <dbReference type="NCBI Taxonomy" id="349746"/>
    <lineage>
        <taxon>Bacteria</taxon>
        <taxon>Pseudomonadati</taxon>
        <taxon>Pseudomonadota</taxon>
        <taxon>Gammaproteobacteria</taxon>
        <taxon>Enterobacterales</taxon>
        <taxon>Yersiniaceae</taxon>
        <taxon>Yersinia</taxon>
    </lineage>
</organism>
<feature type="chain" id="PRO_1000094230" description="Mannonate dehydratase">
    <location>
        <begin position="1"/>
        <end position="397"/>
    </location>
</feature>
<dbReference type="EC" id="4.2.1.8" evidence="1"/>
<dbReference type="EMBL" id="CP000901">
    <property type="protein sequence ID" value="ABX86652.1"/>
    <property type="molecule type" value="Genomic_DNA"/>
</dbReference>
<dbReference type="RefSeq" id="WP_002208813.1">
    <property type="nucleotide sequence ID" value="NZ_CP009935.1"/>
</dbReference>
<dbReference type="SMR" id="A9R4P9"/>
<dbReference type="GeneID" id="57977416"/>
<dbReference type="KEGG" id="ypg:YpAngola_A1509"/>
<dbReference type="PATRIC" id="fig|349746.12.peg.2474"/>
<dbReference type="UniPathway" id="UPA00246"/>
<dbReference type="GO" id="GO:0008198">
    <property type="term" value="F:ferrous iron binding"/>
    <property type="evidence" value="ECO:0007669"/>
    <property type="project" value="TreeGrafter"/>
</dbReference>
<dbReference type="GO" id="GO:0030145">
    <property type="term" value="F:manganese ion binding"/>
    <property type="evidence" value="ECO:0007669"/>
    <property type="project" value="TreeGrafter"/>
</dbReference>
<dbReference type="GO" id="GO:0008927">
    <property type="term" value="F:mannonate dehydratase activity"/>
    <property type="evidence" value="ECO:0007669"/>
    <property type="project" value="UniProtKB-UniRule"/>
</dbReference>
<dbReference type="GO" id="GO:0042840">
    <property type="term" value="P:D-glucuronate catabolic process"/>
    <property type="evidence" value="ECO:0007669"/>
    <property type="project" value="TreeGrafter"/>
</dbReference>
<dbReference type="FunFam" id="3.20.20.150:FF:000010">
    <property type="entry name" value="Mannonate dehydratase"/>
    <property type="match status" value="1"/>
</dbReference>
<dbReference type="Gene3D" id="3.20.20.150">
    <property type="entry name" value="Divalent-metal-dependent TIM barrel enzymes"/>
    <property type="match status" value="1"/>
</dbReference>
<dbReference type="HAMAP" id="MF_00106">
    <property type="entry name" value="UxuA"/>
    <property type="match status" value="1"/>
</dbReference>
<dbReference type="InterPro" id="IPR004628">
    <property type="entry name" value="Man_deHydtase"/>
</dbReference>
<dbReference type="InterPro" id="IPR036237">
    <property type="entry name" value="Xyl_isomerase-like_sf"/>
</dbReference>
<dbReference type="NCBIfam" id="NF003027">
    <property type="entry name" value="PRK03906.1"/>
    <property type="match status" value="1"/>
</dbReference>
<dbReference type="NCBIfam" id="TIGR00695">
    <property type="entry name" value="uxuA"/>
    <property type="match status" value="1"/>
</dbReference>
<dbReference type="PANTHER" id="PTHR30387">
    <property type="entry name" value="MANNONATE DEHYDRATASE"/>
    <property type="match status" value="1"/>
</dbReference>
<dbReference type="PANTHER" id="PTHR30387:SF2">
    <property type="entry name" value="MANNONATE DEHYDRATASE"/>
    <property type="match status" value="1"/>
</dbReference>
<dbReference type="Pfam" id="PF03786">
    <property type="entry name" value="UxuA"/>
    <property type="match status" value="1"/>
</dbReference>
<dbReference type="PIRSF" id="PIRSF016049">
    <property type="entry name" value="Man_dehyd"/>
    <property type="match status" value="1"/>
</dbReference>
<dbReference type="SUPFAM" id="SSF51658">
    <property type="entry name" value="Xylose isomerase-like"/>
    <property type="match status" value="1"/>
</dbReference>
<reference key="1">
    <citation type="journal article" date="2010" name="J. Bacteriol.">
        <title>Genome sequence of the deep-rooted Yersinia pestis strain Angola reveals new insights into the evolution and pangenome of the plague bacterium.</title>
        <authorList>
            <person name="Eppinger M."/>
            <person name="Worsham P.L."/>
            <person name="Nikolich M.P."/>
            <person name="Riley D.R."/>
            <person name="Sebastian Y."/>
            <person name="Mou S."/>
            <person name="Achtman M."/>
            <person name="Lindler L.E."/>
            <person name="Ravel J."/>
        </authorList>
    </citation>
    <scope>NUCLEOTIDE SEQUENCE [LARGE SCALE GENOMIC DNA]</scope>
    <source>
        <strain>Angola</strain>
    </source>
</reference>
<evidence type="ECO:0000255" key="1">
    <source>
        <dbReference type="HAMAP-Rule" id="MF_00106"/>
    </source>
</evidence>
<name>UXUA_YERPG</name>
<comment type="function">
    <text evidence="1">Catalyzes the dehydration of D-mannonate.</text>
</comment>
<comment type="catalytic activity">
    <reaction evidence="1">
        <text>D-mannonate = 2-dehydro-3-deoxy-D-gluconate + H2O</text>
        <dbReference type="Rhea" id="RHEA:20097"/>
        <dbReference type="ChEBI" id="CHEBI:15377"/>
        <dbReference type="ChEBI" id="CHEBI:17767"/>
        <dbReference type="ChEBI" id="CHEBI:57990"/>
        <dbReference type="EC" id="4.2.1.8"/>
    </reaction>
</comment>
<comment type="cofactor">
    <cofactor evidence="1">
        <name>Fe(2+)</name>
        <dbReference type="ChEBI" id="CHEBI:29033"/>
    </cofactor>
    <cofactor evidence="1">
        <name>Mn(2+)</name>
        <dbReference type="ChEBI" id="CHEBI:29035"/>
    </cofactor>
</comment>
<comment type="pathway">
    <text evidence="1">Carbohydrate metabolism; pentose and glucuronate interconversion.</text>
</comment>
<comment type="similarity">
    <text evidence="1">Belongs to the mannonate dehydratase family.</text>
</comment>
<gene>
    <name evidence="1" type="primary">uxuA</name>
    <name type="ordered locus">YpAngola_A1509</name>
</gene>
<proteinExistence type="inferred from homology"/>
<sequence>MEQTWRWYGPNDPVSLDDIRQAGATGVVTALHHIPNGVVWPVSEIKQRQAELAAKNLVWSVVESVPIHEDIKTHSGNYQQYIENYQQTLRNIAECGIDTVCYNFMPILDWTRTDLEYELPDGSKALRFDQIAFAAFELHILKRPGASNDYTAEEQVQAEAYFNAMTEADIAKLTGNIIAGLPGAEEGYTLDQFRARLAEYDGIDKAQLRENMAYFLRAIIPVAEQVGLRMAVHPDDPPRPILGLPRIVSTIEDMQWLKETVDSIHNGFTMCTGSYGVRADNDLVKMIETFGDRIHFTHLRSTCREGNPKTFHEGGHLQGDVDMYSVVKAILTEEQRRQSLGDMRPIPMRPDHGHQMLDDLHKKTNPGYSAIGRLKGLAEVRGVELALKRTFFPELKQ</sequence>
<keyword id="KW-0408">Iron</keyword>
<keyword id="KW-0456">Lyase</keyword>
<keyword id="KW-0464">Manganese</keyword>